<feature type="chain" id="PRO_0000216003" description="Chalcone synthase WHP1">
    <location>
        <begin position="1"/>
        <end position="400"/>
    </location>
</feature>
<feature type="active site" evidence="1">
    <location>
        <position position="167"/>
    </location>
</feature>
<sequence length="400" mass="43172">MAGATVTVDEVRKGQRATGPATVLAIGTATPANCVYQADYPDYYFRITKSDHLTDLKEKFKRMCDKSMIRKRYMHLTEEFLSENPSMCAYMAPSLDARQDVVVTEVPKLGKAAAQEAIKEWGQPKSRITHLVFCTTSGVDMPGADYQLTKALGLRVVNRLMMYQQGCFAGGTVLRVAKDVAENNRGARVMVVCSEITAVTFRGPSESHVDSLVGQALFGDGAAAGRGGADPDGRVERPLFQLVSAAQTILPDSEGAIDGHLREVGLAFHLLKDVPGLISKNIERALEDAFEPLGISDWNSIFWVAHPGGPAILDQVEAKVGLDKARMRATRHVLSEYGNMSSACVLFILDEMRKRPAEDGQSTTGEGLDWGVLFGFGPGLTVETVVLHSVPITTGAPTAA</sequence>
<gene>
    <name type="primary">WHP1</name>
</gene>
<organism>
    <name type="scientific">Zea mays</name>
    <name type="common">Maize</name>
    <dbReference type="NCBI Taxonomy" id="4577"/>
    <lineage>
        <taxon>Eukaryota</taxon>
        <taxon>Viridiplantae</taxon>
        <taxon>Streptophyta</taxon>
        <taxon>Embryophyta</taxon>
        <taxon>Tracheophyta</taxon>
        <taxon>Spermatophyta</taxon>
        <taxon>Magnoliopsida</taxon>
        <taxon>Liliopsida</taxon>
        <taxon>Poales</taxon>
        <taxon>Poaceae</taxon>
        <taxon>PACMAD clade</taxon>
        <taxon>Panicoideae</taxon>
        <taxon>Andropogonodae</taxon>
        <taxon>Andropogoneae</taxon>
        <taxon>Tripsacinae</taxon>
        <taxon>Zea</taxon>
    </lineage>
</organism>
<name>CHS1_MAIZE</name>
<accession>P24824</accession>
<dbReference type="EC" id="2.3.1.74"/>
<dbReference type="EMBL" id="X60204">
    <property type="protein sequence ID" value="CAA42763.1"/>
    <property type="molecule type" value="Genomic_DNA"/>
</dbReference>
<dbReference type="PIR" id="S16599">
    <property type="entry name" value="SYZMW1"/>
</dbReference>
<dbReference type="SMR" id="P24824"/>
<dbReference type="FunCoup" id="P24824">
    <property type="interactions" value="59"/>
</dbReference>
<dbReference type="STRING" id="4577.P24824"/>
<dbReference type="MaizeGDB" id="13853"/>
<dbReference type="InParanoid" id="P24824"/>
<dbReference type="UniPathway" id="UPA00154"/>
<dbReference type="Proteomes" id="UP000007305">
    <property type="component" value="Unplaced"/>
</dbReference>
<dbReference type="GO" id="GO:0016747">
    <property type="term" value="F:acyltransferase activity, transferring groups other than amino-acyl groups"/>
    <property type="evidence" value="ECO:0000318"/>
    <property type="project" value="GO_Central"/>
</dbReference>
<dbReference type="GO" id="GO:0016210">
    <property type="term" value="F:naringenin-chalcone synthase activity"/>
    <property type="evidence" value="ECO:0007669"/>
    <property type="project" value="UniProtKB-EC"/>
</dbReference>
<dbReference type="GO" id="GO:0009813">
    <property type="term" value="P:flavonoid biosynthetic process"/>
    <property type="evidence" value="ECO:0007669"/>
    <property type="project" value="UniProtKB-UniPathway"/>
</dbReference>
<dbReference type="GO" id="GO:0030639">
    <property type="term" value="P:polyketide biosynthetic process"/>
    <property type="evidence" value="ECO:0000318"/>
    <property type="project" value="GO_Central"/>
</dbReference>
<dbReference type="CDD" id="cd00831">
    <property type="entry name" value="CHS_like"/>
    <property type="match status" value="1"/>
</dbReference>
<dbReference type="FunFam" id="3.40.47.10:FF:000014">
    <property type="entry name" value="Chalcone synthase 1"/>
    <property type="match status" value="1"/>
</dbReference>
<dbReference type="FunFam" id="3.40.47.10:FF:000025">
    <property type="entry name" value="Chalcone synthase 2"/>
    <property type="match status" value="1"/>
</dbReference>
<dbReference type="Gene3D" id="3.40.47.10">
    <property type="match status" value="2"/>
</dbReference>
<dbReference type="InterPro" id="IPR012328">
    <property type="entry name" value="Chalcone/stilbene_synt_C"/>
</dbReference>
<dbReference type="InterPro" id="IPR001099">
    <property type="entry name" value="Chalcone/stilbene_synt_N"/>
</dbReference>
<dbReference type="InterPro" id="IPR018088">
    <property type="entry name" value="Chalcone/stilbene_synthase_AS"/>
</dbReference>
<dbReference type="InterPro" id="IPR011141">
    <property type="entry name" value="Polyketide_synthase_type-III"/>
</dbReference>
<dbReference type="InterPro" id="IPR016039">
    <property type="entry name" value="Thiolase-like"/>
</dbReference>
<dbReference type="PANTHER" id="PTHR11877:SF14">
    <property type="entry name" value="CHALCONE SYNTHASE"/>
    <property type="match status" value="1"/>
</dbReference>
<dbReference type="PANTHER" id="PTHR11877">
    <property type="entry name" value="HYDROXYMETHYLGLUTARYL-COA SYNTHASE"/>
    <property type="match status" value="1"/>
</dbReference>
<dbReference type="Pfam" id="PF02797">
    <property type="entry name" value="Chal_sti_synt_C"/>
    <property type="match status" value="1"/>
</dbReference>
<dbReference type="Pfam" id="PF00195">
    <property type="entry name" value="Chal_sti_synt_N"/>
    <property type="match status" value="1"/>
</dbReference>
<dbReference type="PIRSF" id="PIRSF000451">
    <property type="entry name" value="PKS_III"/>
    <property type="match status" value="1"/>
</dbReference>
<dbReference type="SUPFAM" id="SSF53901">
    <property type="entry name" value="Thiolase-like"/>
    <property type="match status" value="2"/>
</dbReference>
<dbReference type="PROSITE" id="PS00441">
    <property type="entry name" value="CHALCONE_SYNTH"/>
    <property type="match status" value="1"/>
</dbReference>
<protein>
    <recommendedName>
        <fullName>Chalcone synthase WHP1</fullName>
        <ecNumber>2.3.1.74</ecNumber>
    </recommendedName>
    <alternativeName>
        <fullName>Naringenin-chalcone synthase WHP1</fullName>
    </alternativeName>
    <alternativeName>
        <fullName>White pollen</fullName>
    </alternativeName>
</protein>
<proteinExistence type="inferred from homology"/>
<comment type="function">
    <text>The primary product of this enzyme is 4,2',4',6'-tetrahydroxychalcone (also termed naringenin-chalcone or chalcone) which can under specific conditions spontaneously isomerize into naringenin.</text>
</comment>
<comment type="catalytic activity">
    <reaction evidence="1">
        <text>(E)-4-coumaroyl-CoA + 3 malonyl-CoA + 3 H(+) = 2',4,4',6'-tetrahydroxychalcone + 3 CO2 + 4 CoA</text>
        <dbReference type="Rhea" id="RHEA:11128"/>
        <dbReference type="ChEBI" id="CHEBI:15378"/>
        <dbReference type="ChEBI" id="CHEBI:15413"/>
        <dbReference type="ChEBI" id="CHEBI:16526"/>
        <dbReference type="ChEBI" id="CHEBI:57287"/>
        <dbReference type="ChEBI" id="CHEBI:57384"/>
        <dbReference type="ChEBI" id="CHEBI:85008"/>
        <dbReference type="EC" id="2.3.1.74"/>
    </reaction>
</comment>
<comment type="pathway">
    <text>Secondary metabolite biosynthesis; flavonoid biosynthesis.</text>
</comment>
<comment type="similarity">
    <text evidence="2">Belongs to the thiolase-like superfamily. Chalcone/stilbene synthases family.</text>
</comment>
<reference key="1">
    <citation type="journal article" date="1991" name="EMBO J.">
        <title>The duplicated chalcone synthase genes C2 and Whp (white pollen) of Zea mays are independently regulated; evidence for translational control of Whp expression by the anthocyanin intensifying gene in.</title>
        <authorList>
            <person name="Franken P."/>
            <person name="Niesbach-Kloesgen U."/>
            <person name="Weydemann U."/>
            <person name="Marechal-Drouard L."/>
            <person name="Saedler H."/>
            <person name="Wienand U."/>
        </authorList>
    </citation>
    <scope>NUCLEOTIDE SEQUENCE [GENOMIC DNA]</scope>
    <source>
        <strain>cv. Line C1-P</strain>
        <tissue>Leaf</tissue>
    </source>
</reference>
<keyword id="KW-0012">Acyltransferase</keyword>
<keyword id="KW-0284">Flavonoid biosynthesis</keyword>
<keyword id="KW-1185">Reference proteome</keyword>
<keyword id="KW-0808">Transferase</keyword>
<evidence type="ECO:0000255" key="1">
    <source>
        <dbReference type="PROSITE-ProRule" id="PRU10023"/>
    </source>
</evidence>
<evidence type="ECO:0000305" key="2"/>